<organism>
    <name type="scientific">Homo sapiens</name>
    <name type="common">Human</name>
    <dbReference type="NCBI Taxonomy" id="9606"/>
    <lineage>
        <taxon>Eukaryota</taxon>
        <taxon>Metazoa</taxon>
        <taxon>Chordata</taxon>
        <taxon>Craniata</taxon>
        <taxon>Vertebrata</taxon>
        <taxon>Euteleostomi</taxon>
        <taxon>Mammalia</taxon>
        <taxon>Eutheria</taxon>
        <taxon>Euarchontoglires</taxon>
        <taxon>Primates</taxon>
        <taxon>Haplorrhini</taxon>
        <taxon>Catarrhini</taxon>
        <taxon>Hominidae</taxon>
        <taxon>Homo</taxon>
    </lineage>
</organism>
<keyword id="KW-0002">3D-structure</keyword>
<keyword id="KW-0963">Cytoplasm</keyword>
<keyword id="KW-0225">Disease variant</keyword>
<keyword id="KW-0887">Epilepsy</keyword>
<keyword id="KW-0991">Intellectual disability</keyword>
<keyword id="KW-1267">Proteomics identification</keyword>
<keyword id="KW-1185">Reference proteome</keyword>
<keyword id="KW-0678">Repressor</keyword>
<keyword id="KW-0687">Ribonucleoprotein</keyword>
<keyword id="KW-0694">RNA-binding</keyword>
<keyword id="KW-0943">RNA-mediated gene silencing</keyword>
<keyword id="KW-0804">Transcription</keyword>
<keyword id="KW-0805">Transcription regulation</keyword>
<keyword id="KW-0810">Translation regulation</keyword>
<keyword id="KW-0832">Ubl conjugation</keyword>
<protein>
    <recommendedName>
        <fullName>Protein argonaute-1</fullName>
        <shortName>Argonaute1</shortName>
        <shortName>hAgo1</shortName>
    </recommendedName>
    <alternativeName>
        <fullName>Argonaute RISC catalytic component 1</fullName>
    </alternativeName>
    <alternativeName>
        <fullName>Eukaryotic translation initiation factor 2C 1</fullName>
        <shortName>eIF-2C 1</shortName>
        <shortName>eIF2C 1</shortName>
    </alternativeName>
    <alternativeName>
        <fullName>Putative RNA-binding protein Q99</fullName>
    </alternativeName>
</protein>
<gene>
    <name type="primary">AGO1</name>
    <name type="synonym">EIF2C1</name>
</gene>
<evidence type="ECO:0000250" key="1">
    <source>
        <dbReference type="UniProtKB" id="Q9UKV8"/>
    </source>
</evidence>
<evidence type="ECO:0000255" key="2">
    <source>
        <dbReference type="PROSITE-ProRule" id="PRU00142"/>
    </source>
</evidence>
<evidence type="ECO:0000255" key="3">
    <source>
        <dbReference type="PROSITE-ProRule" id="PRU00150"/>
    </source>
</evidence>
<evidence type="ECO:0000269" key="4">
    <source>
    </source>
</evidence>
<evidence type="ECO:0000269" key="5">
    <source>
    </source>
</evidence>
<evidence type="ECO:0000269" key="6">
    <source>
    </source>
</evidence>
<evidence type="ECO:0000269" key="7">
    <source>
    </source>
</evidence>
<evidence type="ECO:0000269" key="8">
    <source>
    </source>
</evidence>
<evidence type="ECO:0000269" key="9">
    <source>
    </source>
</evidence>
<evidence type="ECO:0000269" key="10">
    <source>
    </source>
</evidence>
<evidence type="ECO:0000269" key="11">
    <source>
    </source>
</evidence>
<evidence type="ECO:0000269" key="12">
    <source>
    </source>
</evidence>
<evidence type="ECO:0000269" key="13">
    <source>
    </source>
</evidence>
<evidence type="ECO:0000269" key="14">
    <source>
    </source>
</evidence>
<evidence type="ECO:0000269" key="15">
    <source>
    </source>
</evidence>
<evidence type="ECO:0000269" key="16">
    <source>
    </source>
</evidence>
<evidence type="ECO:0000269" key="17">
    <source>
    </source>
</evidence>
<evidence type="ECO:0000269" key="18">
    <source>
    </source>
</evidence>
<evidence type="ECO:0000305" key="19"/>
<evidence type="ECO:0007829" key="20">
    <source>
        <dbReference type="PDB" id="1SI2"/>
    </source>
</evidence>
<evidence type="ECO:0007829" key="21">
    <source>
        <dbReference type="PDB" id="4KRE"/>
    </source>
</evidence>
<evidence type="ECO:0007829" key="22">
    <source>
        <dbReference type="PDB" id="4KRF"/>
    </source>
</evidence>
<evidence type="ECO:0007829" key="23">
    <source>
        <dbReference type="PDB" id="4KXT"/>
    </source>
</evidence>
<evidence type="ECO:0007829" key="24">
    <source>
        <dbReference type="PDB" id="5W6V"/>
    </source>
</evidence>
<dbReference type="EMBL" id="AF093097">
    <property type="protein sequence ID" value="AAF00068.1"/>
    <property type="molecule type" value="mRNA"/>
</dbReference>
<dbReference type="EMBL" id="AL139286">
    <property type="status" value="NOT_ANNOTATED_CDS"/>
    <property type="molecule type" value="Genomic_DNA"/>
</dbReference>
<dbReference type="EMBL" id="BC063275">
    <property type="protein sequence ID" value="AAH63275.1"/>
    <property type="molecule type" value="mRNA"/>
</dbReference>
<dbReference type="CCDS" id="CCDS398.1"/>
<dbReference type="RefSeq" id="NP_001304051.1">
    <property type="nucleotide sequence ID" value="NM_001317122.1"/>
</dbReference>
<dbReference type="RefSeq" id="NP_001304052.1">
    <property type="nucleotide sequence ID" value="NM_001317123.1"/>
</dbReference>
<dbReference type="RefSeq" id="NP_036331.1">
    <property type="nucleotide sequence ID" value="NM_012199.5"/>
</dbReference>
<dbReference type="PDB" id="1SI2">
    <property type="method" value="X-ray"/>
    <property type="resolution" value="2.60 A"/>
    <property type="chains" value="A=225-369"/>
</dbReference>
<dbReference type="PDB" id="1SI3">
    <property type="method" value="X-ray"/>
    <property type="resolution" value="2.60 A"/>
    <property type="chains" value="A=225-369"/>
</dbReference>
<dbReference type="PDB" id="4KRE">
    <property type="method" value="X-ray"/>
    <property type="resolution" value="1.75 A"/>
    <property type="chains" value="A=1-857"/>
</dbReference>
<dbReference type="PDB" id="4KRF">
    <property type="method" value="X-ray"/>
    <property type="resolution" value="2.10 A"/>
    <property type="chains" value="A=1-857"/>
</dbReference>
<dbReference type="PDB" id="4KXT">
    <property type="method" value="X-ray"/>
    <property type="resolution" value="2.29 A"/>
    <property type="chains" value="A=1-857"/>
</dbReference>
<dbReference type="PDB" id="5W6V">
    <property type="method" value="X-ray"/>
    <property type="resolution" value="2.83 A"/>
    <property type="chains" value="A=1-857"/>
</dbReference>
<dbReference type="PDBsum" id="1SI2"/>
<dbReference type="PDBsum" id="1SI3"/>
<dbReference type="PDBsum" id="4KRE"/>
<dbReference type="PDBsum" id="4KRF"/>
<dbReference type="PDBsum" id="4KXT"/>
<dbReference type="PDBsum" id="5W6V"/>
<dbReference type="SMR" id="Q9UL18"/>
<dbReference type="BioGRID" id="117726">
    <property type="interactions" value="174"/>
</dbReference>
<dbReference type="ComplexPortal" id="CPX-8623">
    <property type="entry name" value="miRNA RISC complex, TNRC6A variant"/>
</dbReference>
<dbReference type="ComplexPortal" id="CPX-8624">
    <property type="entry name" value="miRNA RISC complex, TNRC6B variant"/>
</dbReference>
<dbReference type="ComplexPortal" id="CPX-8625">
    <property type="entry name" value="miRNA RISC complex, TNRC6C variant"/>
</dbReference>
<dbReference type="DIP" id="DIP-29193N"/>
<dbReference type="FunCoup" id="Q9UL18">
    <property type="interactions" value="2645"/>
</dbReference>
<dbReference type="IntAct" id="Q9UL18">
    <property type="interactions" value="212"/>
</dbReference>
<dbReference type="MINT" id="Q9UL18"/>
<dbReference type="STRING" id="9606.ENSP00000362300"/>
<dbReference type="GlyGen" id="Q9UL18">
    <property type="glycosylation" value="2 sites, 1 N-linked glycan (1 site), 1 O-linked glycan (1 site)"/>
</dbReference>
<dbReference type="iPTMnet" id="Q9UL18"/>
<dbReference type="PhosphoSitePlus" id="Q9UL18"/>
<dbReference type="BioMuta" id="AGO1"/>
<dbReference type="DMDM" id="88984241"/>
<dbReference type="jPOST" id="Q9UL18"/>
<dbReference type="MassIVE" id="Q9UL18"/>
<dbReference type="PaxDb" id="9606-ENSP00000362300"/>
<dbReference type="PeptideAtlas" id="Q9UL18"/>
<dbReference type="ProteomicsDB" id="84931"/>
<dbReference type="Pumba" id="Q9UL18"/>
<dbReference type="Antibodypedia" id="31600">
    <property type="antibodies" value="305 antibodies from 39 providers"/>
</dbReference>
<dbReference type="DNASU" id="26523"/>
<dbReference type="Ensembl" id="ENST00000373204.6">
    <property type="protein sequence ID" value="ENSP00000362300.4"/>
    <property type="gene ID" value="ENSG00000092847.14"/>
</dbReference>
<dbReference type="GeneID" id="26523"/>
<dbReference type="KEGG" id="hsa:26523"/>
<dbReference type="MANE-Select" id="ENST00000373204.6">
    <property type="protein sequence ID" value="ENSP00000362300.4"/>
    <property type="RefSeq nucleotide sequence ID" value="NM_012199.5"/>
    <property type="RefSeq protein sequence ID" value="NP_036331.1"/>
</dbReference>
<dbReference type="UCSC" id="uc001bzl.4">
    <property type="organism name" value="human"/>
</dbReference>
<dbReference type="AGR" id="HGNC:3262"/>
<dbReference type="CTD" id="26523"/>
<dbReference type="DisGeNET" id="26523"/>
<dbReference type="GeneCards" id="AGO1"/>
<dbReference type="HGNC" id="HGNC:3262">
    <property type="gene designation" value="AGO1"/>
</dbReference>
<dbReference type="HPA" id="ENSG00000092847">
    <property type="expression patterns" value="Low tissue specificity"/>
</dbReference>
<dbReference type="MalaCards" id="AGO1"/>
<dbReference type="MIM" id="606228">
    <property type="type" value="gene"/>
</dbReference>
<dbReference type="MIM" id="620292">
    <property type="type" value="phenotype"/>
</dbReference>
<dbReference type="neXtProt" id="NX_Q9UL18"/>
<dbReference type="OpenTargets" id="ENSG00000092847"/>
<dbReference type="Orphanet" id="528084">
    <property type="disease" value="Non-specific syndromic intellectual disability"/>
</dbReference>
<dbReference type="PharmGKB" id="PA27693"/>
<dbReference type="VEuPathDB" id="HostDB:ENSG00000092847"/>
<dbReference type="eggNOG" id="KOG1041">
    <property type="taxonomic scope" value="Eukaryota"/>
</dbReference>
<dbReference type="GeneTree" id="ENSGT00940000158568"/>
<dbReference type="HOGENOM" id="CLU_004544_4_3_1"/>
<dbReference type="InParanoid" id="Q9UL18"/>
<dbReference type="OMA" id="MGQWPGE"/>
<dbReference type="OrthoDB" id="10252740at2759"/>
<dbReference type="PAN-GO" id="Q9UL18">
    <property type="GO annotations" value="2 GO annotations based on evolutionary models"/>
</dbReference>
<dbReference type="PhylomeDB" id="Q9UL18"/>
<dbReference type="TreeFam" id="TF101510"/>
<dbReference type="PathwayCommons" id="Q9UL18"/>
<dbReference type="Reactome" id="R-HSA-1912408">
    <property type="pathway name" value="Pre-NOTCH Transcription and Translation"/>
</dbReference>
<dbReference type="Reactome" id="R-HSA-203927">
    <property type="pathway name" value="MicroRNA (miRNA) biogenesis"/>
</dbReference>
<dbReference type="Reactome" id="R-HSA-2559580">
    <property type="pathway name" value="Oxidative Stress Induced Senescence"/>
</dbReference>
<dbReference type="Reactome" id="R-HSA-2559585">
    <property type="pathway name" value="Oncogene Induced Senescence"/>
</dbReference>
<dbReference type="Reactome" id="R-HSA-4086398">
    <property type="pathway name" value="Ca2+ pathway"/>
</dbReference>
<dbReference type="Reactome" id="R-HSA-426486">
    <property type="pathway name" value="Small interfering RNA (siRNA) biogenesis"/>
</dbReference>
<dbReference type="Reactome" id="R-HSA-426496">
    <property type="pathway name" value="Post-transcriptional silencing by small RNAs"/>
</dbReference>
<dbReference type="Reactome" id="R-HSA-5578749">
    <property type="pathway name" value="Transcriptional regulation by small RNAs"/>
</dbReference>
<dbReference type="Reactome" id="R-HSA-5628897">
    <property type="pathway name" value="TP53 Regulates Metabolic Genes"/>
</dbReference>
<dbReference type="Reactome" id="R-HSA-5687128">
    <property type="pathway name" value="MAPK6/MAPK4 signaling"/>
</dbReference>
<dbReference type="Reactome" id="R-HSA-8853884">
    <property type="pathway name" value="Transcriptional Regulation by VENTX"/>
</dbReference>
<dbReference type="Reactome" id="R-HSA-8934593">
    <property type="pathway name" value="Regulation of RUNX1 Expression and Activity"/>
</dbReference>
<dbReference type="Reactome" id="R-HSA-8936459">
    <property type="pathway name" value="RUNX1 regulates genes involved in megakaryocyte differentiation and platelet function"/>
</dbReference>
<dbReference type="Reactome" id="R-HSA-8943723">
    <property type="pathway name" value="Regulation of PTEN mRNA translation"/>
</dbReference>
<dbReference type="Reactome" id="R-HSA-8948700">
    <property type="pathway name" value="Competing endogenous RNAs (ceRNAs) regulate PTEN translation"/>
</dbReference>
<dbReference type="Reactome" id="R-HSA-8986944">
    <property type="pathway name" value="Transcriptional Regulation by MECP2"/>
</dbReference>
<dbReference type="Reactome" id="R-HSA-9018519">
    <property type="pathway name" value="Estrogen-dependent gene expression"/>
</dbReference>
<dbReference type="Reactome" id="R-HSA-9022692">
    <property type="pathway name" value="Regulation of MECP2 expression and activity"/>
</dbReference>
<dbReference type="Reactome" id="R-HSA-9029569">
    <property type="pathway name" value="NR1H3 &amp; NR1H2 regulate gene expression linked to cholesterol transport and efflux"/>
</dbReference>
<dbReference type="Reactome" id="R-HSA-9725371">
    <property type="pathway name" value="Nuclear events stimulated by ALK signaling in cancer"/>
</dbReference>
<dbReference type="Reactome" id="R-HSA-9759811">
    <property type="pathway name" value="Regulation of CDH11 mRNA translation by microRNAs"/>
</dbReference>
<dbReference type="Reactome" id="R-HSA-9768778">
    <property type="pathway name" value="Regulation of NPAS4 mRNA translation"/>
</dbReference>
<dbReference type="Reactome" id="R-HSA-9824594">
    <property type="pathway name" value="Regulation of MITF-M-dependent genes involved in apoptosis"/>
</dbReference>
<dbReference type="Reactome" id="R-HSA-9839394">
    <property type="pathway name" value="TGFBR3 expression"/>
</dbReference>
<dbReference type="SignaLink" id="Q9UL18"/>
<dbReference type="BioGRID-ORCS" id="26523">
    <property type="hits" value="57 hits in 1156 CRISPR screens"/>
</dbReference>
<dbReference type="CD-CODE" id="232F8A39">
    <property type="entry name" value="P-body"/>
</dbReference>
<dbReference type="CD-CODE" id="DEE660B4">
    <property type="entry name" value="Stress granule"/>
</dbReference>
<dbReference type="ChiTaRS" id="AGO1">
    <property type="organism name" value="human"/>
</dbReference>
<dbReference type="EvolutionaryTrace" id="Q9UL18"/>
<dbReference type="GeneWiki" id="EIF2C1"/>
<dbReference type="GenomeRNAi" id="26523"/>
<dbReference type="Pharos" id="Q9UL18">
    <property type="development level" value="Tbio"/>
</dbReference>
<dbReference type="PRO" id="PR:Q9UL18"/>
<dbReference type="Proteomes" id="UP000005640">
    <property type="component" value="Chromosome 1"/>
</dbReference>
<dbReference type="RNAct" id="Q9UL18">
    <property type="molecule type" value="protein"/>
</dbReference>
<dbReference type="Bgee" id="ENSG00000092847">
    <property type="expression patterns" value="Expressed in ganglionic eminence and 197 other cell types or tissues"/>
</dbReference>
<dbReference type="ExpressionAtlas" id="Q9UL18">
    <property type="expression patterns" value="baseline and differential"/>
</dbReference>
<dbReference type="GO" id="GO:0005737">
    <property type="term" value="C:cytoplasm"/>
    <property type="evidence" value="ECO:0000314"/>
    <property type="project" value="UniProtKB"/>
</dbReference>
<dbReference type="GO" id="GO:0036464">
    <property type="term" value="C:cytoplasmic ribonucleoprotein granule"/>
    <property type="evidence" value="ECO:0000314"/>
    <property type="project" value="HPA"/>
</dbReference>
<dbReference type="GO" id="GO:0005829">
    <property type="term" value="C:cytosol"/>
    <property type="evidence" value="ECO:0000314"/>
    <property type="project" value="HPA"/>
</dbReference>
<dbReference type="GO" id="GO:0005654">
    <property type="term" value="C:nucleoplasm"/>
    <property type="evidence" value="ECO:0000304"/>
    <property type="project" value="Reactome"/>
</dbReference>
<dbReference type="GO" id="GO:0005634">
    <property type="term" value="C:nucleus"/>
    <property type="evidence" value="ECO:0000318"/>
    <property type="project" value="GO_Central"/>
</dbReference>
<dbReference type="GO" id="GO:0000932">
    <property type="term" value="C:P-body"/>
    <property type="evidence" value="ECO:0007669"/>
    <property type="project" value="UniProtKB-SubCell"/>
</dbReference>
<dbReference type="GO" id="GO:0016442">
    <property type="term" value="C:RISC complex"/>
    <property type="evidence" value="ECO:0000314"/>
    <property type="project" value="UniProtKB"/>
</dbReference>
<dbReference type="GO" id="GO:0070578">
    <property type="term" value="C:RISC-loading complex"/>
    <property type="evidence" value="ECO:0000314"/>
    <property type="project" value="BHF-UCL"/>
</dbReference>
<dbReference type="GO" id="GO:0001046">
    <property type="term" value="F:core promoter sequence-specific DNA binding"/>
    <property type="evidence" value="ECO:0000315"/>
    <property type="project" value="BHF-UCL"/>
</dbReference>
<dbReference type="GO" id="GO:0003725">
    <property type="term" value="F:double-stranded RNA binding"/>
    <property type="evidence" value="ECO:0000314"/>
    <property type="project" value="BHF-UCL"/>
</dbReference>
<dbReference type="GO" id="GO:0035198">
    <property type="term" value="F:miRNA binding"/>
    <property type="evidence" value="ECO:0000314"/>
    <property type="project" value="BHF-UCL"/>
</dbReference>
<dbReference type="GO" id="GO:0003723">
    <property type="term" value="F:RNA binding"/>
    <property type="evidence" value="ECO:0000314"/>
    <property type="project" value="UniProtKB"/>
</dbReference>
<dbReference type="GO" id="GO:0000978">
    <property type="term" value="F:RNA polymerase II cis-regulatory region sequence-specific DNA binding"/>
    <property type="evidence" value="ECO:0007669"/>
    <property type="project" value="Ensembl"/>
</dbReference>
<dbReference type="GO" id="GO:0000993">
    <property type="term" value="F:RNA polymerase II complex binding"/>
    <property type="evidence" value="ECO:0000314"/>
    <property type="project" value="BHF-UCL"/>
</dbReference>
<dbReference type="GO" id="GO:0003727">
    <property type="term" value="F:single-stranded RNA binding"/>
    <property type="evidence" value="ECO:0000314"/>
    <property type="project" value="BHF-UCL"/>
</dbReference>
<dbReference type="GO" id="GO:0010586">
    <property type="term" value="P:miRNA metabolic process"/>
    <property type="evidence" value="ECO:0007669"/>
    <property type="project" value="Ensembl"/>
</dbReference>
<dbReference type="GO" id="GO:0035196">
    <property type="term" value="P:miRNA processing"/>
    <property type="evidence" value="ECO:0000315"/>
    <property type="project" value="BHF-UCL"/>
</dbReference>
<dbReference type="GO" id="GO:0035278">
    <property type="term" value="P:miRNA-mediated gene silencing by inhibition of translation"/>
    <property type="evidence" value="ECO:0000314"/>
    <property type="project" value="UniProtKB"/>
</dbReference>
<dbReference type="GO" id="GO:0016525">
    <property type="term" value="P:negative regulation of angiogenesis"/>
    <property type="evidence" value="ECO:0000315"/>
    <property type="project" value="BHF-UCL"/>
</dbReference>
<dbReference type="GO" id="GO:0000956">
    <property type="term" value="P:nuclear-transcribed mRNA catabolic process"/>
    <property type="evidence" value="ECO:0000314"/>
    <property type="project" value="UniProtKB"/>
</dbReference>
<dbReference type="GO" id="GO:0010628">
    <property type="term" value="P:positive regulation of gene expression"/>
    <property type="evidence" value="ECO:0007669"/>
    <property type="project" value="Ensembl"/>
</dbReference>
<dbReference type="GO" id="GO:1901224">
    <property type="term" value="P:positive regulation of non-canonical NF-kappaB signal transduction"/>
    <property type="evidence" value="ECO:0007669"/>
    <property type="project" value="Ensembl"/>
</dbReference>
<dbReference type="GO" id="GO:0045944">
    <property type="term" value="P:positive regulation of transcription by RNA polymerase II"/>
    <property type="evidence" value="ECO:0000315"/>
    <property type="project" value="BHF-UCL"/>
</dbReference>
<dbReference type="GO" id="GO:0031054">
    <property type="term" value="P:pre-miRNA processing"/>
    <property type="evidence" value="ECO:0000314"/>
    <property type="project" value="BHF-UCL"/>
</dbReference>
<dbReference type="GO" id="GO:0043488">
    <property type="term" value="P:regulation of mRNA stability"/>
    <property type="evidence" value="ECO:0007669"/>
    <property type="project" value="Ensembl"/>
</dbReference>
<dbReference type="GO" id="GO:0035194">
    <property type="term" value="P:regulatory ncRNA-mediated post-transcriptional gene silencing"/>
    <property type="evidence" value="ECO:0000318"/>
    <property type="project" value="GO_Central"/>
</dbReference>
<dbReference type="GO" id="GO:0070922">
    <property type="term" value="P:RISC complex assembly"/>
    <property type="evidence" value="ECO:0000314"/>
    <property type="project" value="BHF-UCL"/>
</dbReference>
<dbReference type="CDD" id="cd02846">
    <property type="entry name" value="PAZ_argonaute_like"/>
    <property type="match status" value="1"/>
</dbReference>
<dbReference type="CDD" id="cd04657">
    <property type="entry name" value="Piwi_ago-like"/>
    <property type="match status" value="1"/>
</dbReference>
<dbReference type="FunFam" id="2.170.260.10:FF:000001">
    <property type="entry name" value="Protein argonaute-2"/>
    <property type="match status" value="1"/>
</dbReference>
<dbReference type="FunFam" id="3.30.420.10:FF:000001">
    <property type="entry name" value="Protein argonaute-2"/>
    <property type="match status" value="1"/>
</dbReference>
<dbReference type="FunFam" id="3.40.50.2300:FF:000005">
    <property type="entry name" value="Protein argonaute-2"/>
    <property type="match status" value="1"/>
</dbReference>
<dbReference type="Gene3D" id="3.40.50.2300">
    <property type="match status" value="1"/>
</dbReference>
<dbReference type="Gene3D" id="2.170.260.10">
    <property type="entry name" value="paz domain"/>
    <property type="match status" value="1"/>
</dbReference>
<dbReference type="Gene3D" id="3.30.420.10">
    <property type="entry name" value="Ribonuclease H-like superfamily/Ribonuclease H"/>
    <property type="match status" value="1"/>
</dbReference>
<dbReference type="InterPro" id="IPR014811">
    <property type="entry name" value="ArgoL1"/>
</dbReference>
<dbReference type="InterPro" id="IPR032472">
    <property type="entry name" value="ArgoL2"/>
</dbReference>
<dbReference type="InterPro" id="IPR032473">
    <property type="entry name" value="Argonaute_Mid_dom"/>
</dbReference>
<dbReference type="InterPro" id="IPR032474">
    <property type="entry name" value="Argonaute_N"/>
</dbReference>
<dbReference type="InterPro" id="IPR003100">
    <property type="entry name" value="PAZ_dom"/>
</dbReference>
<dbReference type="InterPro" id="IPR036085">
    <property type="entry name" value="PAZ_dom_sf"/>
</dbReference>
<dbReference type="InterPro" id="IPR003165">
    <property type="entry name" value="Piwi"/>
</dbReference>
<dbReference type="InterPro" id="IPR045246">
    <property type="entry name" value="Piwi_ago-like"/>
</dbReference>
<dbReference type="InterPro" id="IPR012337">
    <property type="entry name" value="RNaseH-like_sf"/>
</dbReference>
<dbReference type="InterPro" id="IPR036397">
    <property type="entry name" value="RNaseH_sf"/>
</dbReference>
<dbReference type="PANTHER" id="PTHR22891">
    <property type="entry name" value="EUKARYOTIC TRANSLATION INITIATION FACTOR 2C"/>
    <property type="match status" value="1"/>
</dbReference>
<dbReference type="Pfam" id="PF08699">
    <property type="entry name" value="ArgoL1"/>
    <property type="match status" value="1"/>
</dbReference>
<dbReference type="Pfam" id="PF16488">
    <property type="entry name" value="ArgoL2"/>
    <property type="match status" value="1"/>
</dbReference>
<dbReference type="Pfam" id="PF16487">
    <property type="entry name" value="ArgoMid"/>
    <property type="match status" value="1"/>
</dbReference>
<dbReference type="Pfam" id="PF16486">
    <property type="entry name" value="ArgoN"/>
    <property type="match status" value="1"/>
</dbReference>
<dbReference type="Pfam" id="PF02170">
    <property type="entry name" value="PAZ"/>
    <property type="match status" value="1"/>
</dbReference>
<dbReference type="Pfam" id="PF02171">
    <property type="entry name" value="Piwi"/>
    <property type="match status" value="1"/>
</dbReference>
<dbReference type="SMART" id="SM01163">
    <property type="entry name" value="DUF1785"/>
    <property type="match status" value="1"/>
</dbReference>
<dbReference type="SMART" id="SM00949">
    <property type="entry name" value="PAZ"/>
    <property type="match status" value="1"/>
</dbReference>
<dbReference type="SMART" id="SM00950">
    <property type="entry name" value="Piwi"/>
    <property type="match status" value="1"/>
</dbReference>
<dbReference type="SUPFAM" id="SSF101690">
    <property type="entry name" value="PAZ domain"/>
    <property type="match status" value="1"/>
</dbReference>
<dbReference type="SUPFAM" id="SSF53098">
    <property type="entry name" value="Ribonuclease H-like"/>
    <property type="match status" value="1"/>
</dbReference>
<dbReference type="PROSITE" id="PS50821">
    <property type="entry name" value="PAZ"/>
    <property type="match status" value="1"/>
</dbReference>
<dbReference type="PROSITE" id="PS50822">
    <property type="entry name" value="PIWI"/>
    <property type="match status" value="1"/>
</dbReference>
<feature type="chain" id="PRO_0000194055" description="Protein argonaute-1">
    <location>
        <begin position="1"/>
        <end position="857"/>
    </location>
</feature>
<feature type="domain" description="PAZ" evidence="2">
    <location>
        <begin position="227"/>
        <end position="346"/>
    </location>
</feature>
<feature type="domain" description="Piwi" evidence="3">
    <location>
        <begin position="515"/>
        <end position="816"/>
    </location>
</feature>
<feature type="region of interest" description="Interaction with guide RNA">
    <location>
        <begin position="309"/>
        <end position="314"/>
    </location>
</feature>
<feature type="region of interest" description="Interaction with guide RNA">
    <location>
        <begin position="522"/>
        <end position="564"/>
    </location>
</feature>
<feature type="region of interest" description="Impairs access of bound RNA to the active site">
    <location>
        <begin position="670"/>
        <end position="675"/>
    </location>
</feature>
<feature type="region of interest" description="Interaction with guide RNA">
    <location>
        <begin position="708"/>
        <end position="712"/>
    </location>
</feature>
<feature type="region of interest" description="Interaction with guide RNA">
    <location>
        <begin position="751"/>
        <end position="759"/>
    </location>
</feature>
<feature type="region of interest" description="Interaction with guide RNA">
    <location>
        <begin position="788"/>
        <end position="813"/>
    </location>
</feature>
<feature type="sequence variant" id="VAR_088406" description="In NEDLBAS." evidence="18">
    <location>
        <position position="180"/>
    </location>
</feature>
<feature type="sequence variant" id="VAR_088407" description="In NEDLBAS; dbSNP:rs1553154069." evidence="18">
    <original>P</original>
    <variation>L</variation>
    <location>
        <position position="189"/>
    </location>
</feature>
<feature type="sequence variant" id="VAR_088408" description="In NEDLBAS; dbSNP:rs1645264815." evidence="12 18">
    <original>L</original>
    <variation>P</variation>
    <location>
        <position position="190"/>
    </location>
</feature>
<feature type="sequence variant" id="VAR_088409" description="In NEDLBAS; dbSNP:rs1645264815." evidence="18">
    <original>L</original>
    <variation>R</variation>
    <location>
        <position position="190"/>
    </location>
</feature>
<feature type="sequence variant" id="VAR_088410" description="In NEDLBAS; uncertain significance; dbSNP:rs2148711374." evidence="16">
    <original>E</original>
    <variation>K</variation>
    <location>
        <position position="195"/>
    </location>
</feature>
<feature type="sequence variant" id="VAR_078651" description="In NEDLBAS; dbSNP:rs2148711383." evidence="15 17 18">
    <original>G</original>
    <variation>S</variation>
    <location>
        <position position="199"/>
    </location>
</feature>
<feature type="sequence variant" id="VAR_088411" description="In NEDLBAS; uncertain significance." evidence="18">
    <original>D</original>
    <variation>V</variation>
    <location>
        <position position="216"/>
    </location>
</feature>
<feature type="sequence variant" id="VAR_088412" description="In NEDLBAS; uncertain significance; dbSNP:rs1645273962." evidence="18">
    <original>R</original>
    <variation>H</variation>
    <location>
        <position position="253"/>
    </location>
</feature>
<feature type="sequence variant" id="VAR_088413" description="In NEDLBAS; dbSNP:rs1645274152." evidence="18">
    <original>V</original>
    <variation>I</variation>
    <location>
        <position position="254"/>
    </location>
</feature>
<feature type="sequence variant" id="VAR_088414" description="In NEDLBAS; uncertain significance." evidence="18">
    <original>P</original>
    <variation>L</variation>
    <location>
        <position position="324"/>
    </location>
</feature>
<feature type="sequence variant" id="VAR_088415" description="In NEDLBAS; uncertain significance; dbSNP:rs1278173586." evidence="18">
    <original>T</original>
    <variation>I</variation>
    <location>
        <position position="355"/>
    </location>
</feature>
<feature type="sequence variant" id="VAR_088416" description="In NEDLBAS; uncertain significance." evidence="18">
    <original>Q</original>
    <variation>R</variation>
    <location>
        <position position="358"/>
    </location>
</feature>
<feature type="sequence variant" id="VAR_088417" description="In NEDLBAS; uncertain significance; dbSNP:rs2148715376." evidence="18">
    <location>
        <position position="376"/>
    </location>
</feature>
<feature type="sequence variant" id="VAR_088418" description="In NEDLBAS; uncertain significance." evidence="18">
    <original>Y</original>
    <variation>F</variation>
    <location>
        <position position="418"/>
    </location>
</feature>
<feature type="sequence variant" id="VAR_088419" description="In NEDLBAS; uncertain significance; dbSNP:rs2148725560." evidence="18">
    <original>H</original>
    <variation>L</variation>
    <location>
        <position position="751"/>
    </location>
</feature>
<feature type="sequence variant" id="VAR_088420" description="In NEDLBAS; uncertain significance; dbSNP:rs2148725999." evidence="18">
    <original>T</original>
    <variation>M</variation>
    <location>
        <position position="781"/>
    </location>
</feature>
<feature type="sequence variant" id="VAR_088421" description="In NEDLBAS; uncertain significance; dbSNP:rs2148726029." evidence="18">
    <original>I</original>
    <variation>F</variation>
    <location>
        <position position="797"/>
    </location>
</feature>
<feature type="mutagenesis site" description="Confers modest RNA cleavage activity; when associated with Q-675 and H-805." evidence="14">
    <original>P</original>
    <variation>S</variation>
    <location>
        <position position="670"/>
    </location>
</feature>
<feature type="mutagenesis site" description="Confers modest RNA cleavage activity; when associated with H-805." evidence="13">
    <original>L</original>
    <variation>F</variation>
    <location>
        <position position="674"/>
    </location>
</feature>
<feature type="mutagenesis site" description="Does not confer enzyme activity by itself. Confers low RNA cleavage activity; when associated with H-805. Confers modest RNA cleavage activity; when associated with S-670 and H-805." evidence="14">
    <original>P</original>
    <variation>Q</variation>
    <location>
        <position position="675"/>
    </location>
</feature>
<feature type="mutagenesis site" description="Does not confer enzyme activity by itself. Confers modest RNA cleavage activity; when associated with F-674." evidence="13 14">
    <original>R</original>
    <variation>H</variation>
    <location>
        <position position="805"/>
    </location>
</feature>
<feature type="sequence conflict" description="In Ref. 3; AAH63275." evidence="19" ref="3">
    <original>D</original>
    <variation>N</variation>
    <location>
        <position position="242"/>
    </location>
</feature>
<feature type="strand" evidence="21">
    <location>
        <begin position="33"/>
        <end position="46"/>
    </location>
</feature>
<feature type="strand" evidence="21">
    <location>
        <begin position="51"/>
        <end position="62"/>
    </location>
</feature>
<feature type="helix" evidence="21">
    <location>
        <begin position="66"/>
        <end position="79"/>
    </location>
</feature>
<feature type="helix" evidence="22">
    <location>
        <begin position="81"/>
        <end position="85"/>
    </location>
</feature>
<feature type="strand" evidence="21">
    <location>
        <begin position="94"/>
        <end position="102"/>
    </location>
</feature>
<feature type="turn" evidence="23">
    <location>
        <begin position="105"/>
        <end position="108"/>
    </location>
</feature>
<feature type="strand" evidence="21">
    <location>
        <begin position="110"/>
        <end position="115"/>
    </location>
</feature>
<feature type="strand" evidence="21">
    <location>
        <begin position="125"/>
        <end position="137"/>
    </location>
</feature>
<feature type="helix" evidence="21">
    <location>
        <begin position="138"/>
        <end position="147"/>
    </location>
</feature>
<feature type="helix" evidence="21">
    <location>
        <begin position="154"/>
        <end position="171"/>
    </location>
</feature>
<feature type="strand" evidence="21">
    <location>
        <begin position="172"/>
        <end position="175"/>
    </location>
</feature>
<feature type="strand" evidence="21">
    <location>
        <begin position="178"/>
        <end position="180"/>
    </location>
</feature>
<feature type="strand" evidence="21">
    <location>
        <begin position="189"/>
        <end position="191"/>
    </location>
</feature>
<feature type="strand" evidence="21">
    <location>
        <begin position="194"/>
        <end position="206"/>
    </location>
</feature>
<feature type="strand" evidence="21">
    <location>
        <begin position="208"/>
        <end position="223"/>
    </location>
</feature>
<feature type="helix" evidence="21">
    <location>
        <begin position="228"/>
        <end position="236"/>
    </location>
</feature>
<feature type="turn" evidence="20">
    <location>
        <begin position="241"/>
        <end position="243"/>
    </location>
</feature>
<feature type="helix" evidence="21">
    <location>
        <begin position="250"/>
        <end position="260"/>
    </location>
</feature>
<feature type="strand" evidence="21">
    <location>
        <begin position="264"/>
        <end position="268"/>
    </location>
</feature>
<feature type="turn" evidence="20">
    <location>
        <begin position="269"/>
        <end position="272"/>
    </location>
</feature>
<feature type="strand" evidence="21">
    <location>
        <begin position="276"/>
        <end position="286"/>
    </location>
</feature>
<feature type="turn" evidence="21">
    <location>
        <begin position="287"/>
        <end position="289"/>
    </location>
</feature>
<feature type="strand" evidence="21">
    <location>
        <begin position="291"/>
        <end position="295"/>
    </location>
</feature>
<feature type="strand" evidence="21">
    <location>
        <begin position="301"/>
        <end position="305"/>
    </location>
</feature>
<feature type="helix" evidence="21">
    <location>
        <begin position="306"/>
        <end position="314"/>
    </location>
</feature>
<feature type="strand" evidence="21">
    <location>
        <begin position="323"/>
        <end position="328"/>
    </location>
</feature>
<feature type="helix" evidence="20">
    <location>
        <begin position="331"/>
        <end position="333"/>
    </location>
</feature>
<feature type="strand" evidence="21">
    <location>
        <begin position="335"/>
        <end position="338"/>
    </location>
</feature>
<feature type="helix" evidence="21">
    <location>
        <begin position="339"/>
        <end position="341"/>
    </location>
</feature>
<feature type="strand" evidence="21">
    <location>
        <begin position="342"/>
        <end position="344"/>
    </location>
</feature>
<feature type="helix" evidence="21">
    <location>
        <begin position="356"/>
        <end position="366"/>
    </location>
</feature>
<feature type="helix" evidence="21">
    <location>
        <begin position="370"/>
        <end position="384"/>
    </location>
</feature>
<feature type="helix" evidence="21">
    <location>
        <begin position="386"/>
        <end position="388"/>
    </location>
</feature>
<feature type="helix" evidence="21">
    <location>
        <begin position="390"/>
        <end position="394"/>
    </location>
</feature>
<feature type="strand" evidence="21">
    <location>
        <begin position="404"/>
        <end position="410"/>
    </location>
</feature>
<feature type="turn" evidence="21">
    <location>
        <begin position="420"/>
        <end position="423"/>
    </location>
</feature>
<feature type="strand" evidence="21">
    <location>
        <begin position="448"/>
        <end position="453"/>
    </location>
</feature>
<feature type="turn" evidence="21">
    <location>
        <begin position="457"/>
        <end position="459"/>
    </location>
</feature>
<feature type="helix" evidence="21">
    <location>
        <begin position="462"/>
        <end position="478"/>
    </location>
</feature>
<feature type="strand" evidence="21">
    <location>
        <begin position="488"/>
        <end position="492"/>
    </location>
</feature>
<feature type="helix" evidence="21">
    <location>
        <begin position="496"/>
        <end position="498"/>
    </location>
</feature>
<feature type="helix" evidence="21">
    <location>
        <begin position="499"/>
        <end position="509"/>
    </location>
</feature>
<feature type="strand" evidence="21">
    <location>
        <begin position="515"/>
        <end position="520"/>
    </location>
</feature>
<feature type="helix" evidence="21">
    <location>
        <begin position="526"/>
        <end position="535"/>
    </location>
</feature>
<feature type="turn" evidence="21">
    <location>
        <begin position="536"/>
        <end position="538"/>
    </location>
</feature>
<feature type="strand" evidence="21">
    <location>
        <begin position="542"/>
        <end position="546"/>
    </location>
</feature>
<feature type="helix" evidence="21">
    <location>
        <begin position="547"/>
        <end position="551"/>
    </location>
</feature>
<feature type="helix" evidence="21">
    <location>
        <begin position="555"/>
        <end position="568"/>
    </location>
</feature>
<feature type="helix" evidence="21">
    <location>
        <begin position="578"/>
        <end position="580"/>
    </location>
</feature>
<feature type="helix" evidence="21">
    <location>
        <begin position="583"/>
        <end position="586"/>
    </location>
</feature>
<feature type="strand" evidence="21">
    <location>
        <begin position="589"/>
        <end position="597"/>
    </location>
</feature>
<feature type="strand" evidence="21">
    <location>
        <begin position="608"/>
        <end position="615"/>
    </location>
</feature>
<feature type="strand" evidence="21">
    <location>
        <begin position="617"/>
        <end position="620"/>
    </location>
</feature>
<feature type="strand" evidence="21">
    <location>
        <begin position="623"/>
        <end position="631"/>
    </location>
</feature>
<feature type="helix" evidence="21">
    <location>
        <begin position="640"/>
        <end position="655"/>
    </location>
</feature>
<feature type="strand" evidence="21">
    <location>
        <begin position="660"/>
        <end position="666"/>
    </location>
</feature>
<feature type="helix" evidence="22">
    <location>
        <begin position="671"/>
        <end position="673"/>
    </location>
</feature>
<feature type="helix" evidence="21">
    <location>
        <begin position="674"/>
        <end position="692"/>
    </location>
</feature>
<feature type="strand" evidence="21">
    <location>
        <begin position="699"/>
        <end position="706"/>
    </location>
</feature>
<feature type="strand" evidence="21">
    <location>
        <begin position="713"/>
        <end position="717"/>
    </location>
</feature>
<feature type="helix" evidence="21">
    <location>
        <begin position="718"/>
        <end position="720"/>
    </location>
</feature>
<feature type="turn" evidence="21">
    <location>
        <begin position="723"/>
        <end position="726"/>
    </location>
</feature>
<feature type="strand" evidence="21">
    <location>
        <begin position="732"/>
        <end position="734"/>
    </location>
</feature>
<feature type="strand" evidence="21">
    <location>
        <begin position="736"/>
        <end position="739"/>
    </location>
</feature>
<feature type="strand" evidence="21">
    <location>
        <begin position="741"/>
        <end position="743"/>
    </location>
</feature>
<feature type="strand" evidence="21">
    <location>
        <begin position="745"/>
        <end position="749"/>
    </location>
</feature>
<feature type="strand" evidence="21">
    <location>
        <begin position="755"/>
        <end position="757"/>
    </location>
</feature>
<feature type="strand" evidence="21">
    <location>
        <begin position="761"/>
        <end position="768"/>
    </location>
</feature>
<feature type="helix" evidence="21">
    <location>
        <begin position="774"/>
        <end position="784"/>
    </location>
</feature>
<feature type="strand" evidence="24">
    <location>
        <begin position="791"/>
        <end position="793"/>
    </location>
</feature>
<feature type="helix" evidence="21">
    <location>
        <begin position="799"/>
        <end position="814"/>
    </location>
</feature>
<feature type="helix" evidence="21">
    <location>
        <begin position="837"/>
        <end position="843"/>
    </location>
</feature>
<feature type="helix" evidence="21">
    <location>
        <begin position="848"/>
        <end position="851"/>
    </location>
</feature>
<name>AGO1_HUMAN</name>
<accession>Q9UL18</accession>
<accession>Q5TA57</accession>
<accession>Q6P4S0</accession>
<comment type="function">
    <text evidence="4 6 8">Required for RNA-mediated gene silencing (RNAi). Binds to short RNAs such as microRNAs (miRNAs) or short interfering RNAs (siRNAs), and represses the translation of mRNAs which are complementary to them. Lacks endonuclease activity and does not appear to cleave target mRNAs. Also required for transcriptional gene silencing (TGS) of promoter regions which are complementary to bound short antigene RNAs (agRNAs).</text>
</comment>
<comment type="subunit">
    <text evidence="4 5 7 9 10 11 13 14">Interacts with DDB1, DDX5, DDX6, DHX30, DHX36, DDX47, DICER1, AGO2, ELAVL1, HNRNPF, IGF2BP1, ILF3, IMP8, MATR3, MOV10, PABPC1, PRMT5, RBM4, SART3, TNRC6B, UPF1 and YBX1. Associates with polysomes and messenger ribonucleoproteins (mNRPs). Interacts with LIMD1, WTIP and AJUBA. Interacts with APOBEC3F, APOBEC3G and APOBEC3H.</text>
</comment>
<comment type="interaction">
    <interactant intactId="EBI-527363">
        <id>Q9UL18</id>
    </interactant>
    <interactant intactId="EBI-528269">
        <id>Q9UKV8</id>
        <label>AGO2</label>
    </interactant>
    <organismsDiffer>false</organismsDiffer>
    <experiments>7</experiments>
</comment>
<comment type="interaction">
    <interactant intactId="EBI-527363">
        <id>Q9UL18</id>
    </interactant>
    <interactant intactId="EBI-1046993">
        <id>Q66GS9</id>
        <label>CEP135</label>
    </interactant>
    <organismsDiffer>false</organismsDiffer>
    <experiments>2</experiments>
</comment>
<comment type="interaction">
    <interactant intactId="EBI-527363">
        <id>Q9UL18</id>
    </interactant>
    <interactant intactId="EBI-395506">
        <id>Q9UPY3</id>
        <label>DICER1</label>
    </interactant>
    <organismsDiffer>false</organismsDiffer>
    <experiments>8</experiments>
</comment>
<comment type="interaction">
    <interactant intactId="EBI-527363">
        <id>Q9UL18</id>
    </interactant>
    <interactant intactId="EBI-352572">
        <id>P08238</id>
        <label>HSP90AB1</label>
    </interactant>
    <organismsDiffer>false</organismsDiffer>
    <experiments>5</experiments>
</comment>
<comment type="interaction">
    <interactant intactId="EBI-527363">
        <id>Q9UL18</id>
    </interactant>
    <interactant intactId="EBI-358808">
        <id>O15397</id>
        <label>IPO8</label>
    </interactant>
    <organismsDiffer>false</organismsDiffer>
    <experiments>2</experiments>
</comment>
<comment type="interaction">
    <interactant intactId="EBI-527363">
        <id>Q9UL18</id>
    </interactant>
    <interactant intactId="EBI-2652871">
        <id>Q9UGP4</id>
        <label>LIMD1</label>
    </interactant>
    <organismsDiffer>false</organismsDiffer>
    <experiments>3</experiments>
</comment>
<comment type="interaction">
    <interactant intactId="EBI-527363">
        <id>Q9UL18</id>
    </interactant>
    <interactant intactId="EBI-716663">
        <id>P53041</id>
        <label>PPP5C</label>
    </interactant>
    <organismsDiffer>false</organismsDiffer>
    <experiments>2</experiments>
</comment>
<comment type="interaction">
    <interactant intactId="EBI-527363">
        <id>Q9UL18</id>
    </interactant>
    <interactant intactId="EBI-977302">
        <id>P04156</id>
        <label>PRNP</label>
    </interactant>
    <organismsDiffer>false</organismsDiffer>
    <experiments>2</experiments>
</comment>
<comment type="interaction">
    <interactant intactId="EBI-527363">
        <id>Q9UL18</id>
    </interactant>
    <interactant intactId="EBI-2269715">
        <id>Q8NDV7</id>
        <label>TNRC6A</label>
    </interactant>
    <organismsDiffer>false</organismsDiffer>
    <experiments>8</experiments>
</comment>
<comment type="interaction">
    <interactant intactId="EBI-527363">
        <id>Q9UL18</id>
    </interactant>
    <interactant intactId="EBI-6514011">
        <id>Q9UPQ9-2</id>
        <label>TNRC6B</label>
    </interactant>
    <organismsDiffer>false</organismsDiffer>
    <experiments>4</experiments>
</comment>
<comment type="interaction">
    <interactant intactId="EBI-527363">
        <id>Q9UL18</id>
    </interactant>
    <interactant intactId="EBI-6507625">
        <id>Q9HCJ0</id>
        <label>TNRC6C</label>
    </interactant>
    <organismsDiffer>false</organismsDiffer>
    <experiments>3</experiments>
</comment>
<comment type="subcellular location">
    <subcellularLocation>
        <location evidence="4 10">Cytoplasm</location>
        <location evidence="4 10">P-body</location>
    </subcellularLocation>
</comment>
<comment type="PTM">
    <text evidence="1">Ubiquitinated on surface-exposed lysines by a SCF-like E3 ubiquitin-protein ligase complex containing ZSWIM8 during target-directed microRNA degradation (TDMD), a process that mediates degradation of microRNAs (miRNAs). Ubiquitination by the SCF-like E3 ubiquitin-protein ligase complex containing ZSWIM8 leads to its subsequent degradation, thereby exposing miRNAs for degradation. ZSWIM8 recognizes and binds AGO1 when it is engaged with a TDMD target.</text>
</comment>
<comment type="disease" evidence="12 15 16 17 18">
    <disease id="DI-06631">
        <name>Neurodevelopmental disorder with language delay and behavioral abnormalities, with or without seizures</name>
        <acronym>NEDLBAS</acronym>
        <description>An autosomal dominant neurodevelopmental disorder characterized by global developmental delay with intellectual disability of varying severity, speech and motor delay, and behavioral abnormalities, including autistic features. About half of patients develop seizures.</description>
        <dbReference type="MIM" id="620292"/>
    </disease>
    <text>The disease is caused by variants affecting the gene represented in this entry.</text>
</comment>
<comment type="miscellaneous">
    <text>Lacks RNA cleavage activity due to the absence of the conserved His at position 805, but also because it binds the RNA in a subtly different manner that precludes efficient cleavage.</text>
</comment>
<comment type="similarity">
    <text evidence="19">Belongs to the argonaute family. Ago subfamily.</text>
</comment>
<proteinExistence type="evidence at protein level"/>
<reference key="1">
    <citation type="journal article" date="1999" name="Genomics">
        <title>Human eukaryotic initiation factor EIF2C1 gene: cDNA sequence, genomic organization, localization to chromosomal bands 1p34-p35, and expression.</title>
        <authorList>
            <person name="Koesters R."/>
            <person name="Adams V."/>
            <person name="Betts D."/>
            <person name="Moos R."/>
            <person name="Schmid M."/>
            <person name="Siermann A."/>
            <person name="Hassam S."/>
            <person name="Weitz S."/>
            <person name="Lichter P."/>
            <person name="Heitz P.U."/>
            <person name="von Knebel Doeberitz M."/>
            <person name="Briner J."/>
        </authorList>
    </citation>
    <scope>NUCLEOTIDE SEQUENCE [MRNA]</scope>
</reference>
<reference key="2">
    <citation type="journal article" date="2006" name="Nature">
        <title>The DNA sequence and biological annotation of human chromosome 1.</title>
        <authorList>
            <person name="Gregory S.G."/>
            <person name="Barlow K.F."/>
            <person name="McLay K.E."/>
            <person name="Kaul R."/>
            <person name="Swarbreck D."/>
            <person name="Dunham A."/>
            <person name="Scott C.E."/>
            <person name="Howe K.L."/>
            <person name="Woodfine K."/>
            <person name="Spencer C.C.A."/>
            <person name="Jones M.C."/>
            <person name="Gillson C."/>
            <person name="Searle S."/>
            <person name="Zhou Y."/>
            <person name="Kokocinski F."/>
            <person name="McDonald L."/>
            <person name="Evans R."/>
            <person name="Phillips K."/>
            <person name="Atkinson A."/>
            <person name="Cooper R."/>
            <person name="Jones C."/>
            <person name="Hall R.E."/>
            <person name="Andrews T.D."/>
            <person name="Lloyd C."/>
            <person name="Ainscough R."/>
            <person name="Almeida J.P."/>
            <person name="Ambrose K.D."/>
            <person name="Anderson F."/>
            <person name="Andrew R.W."/>
            <person name="Ashwell R.I.S."/>
            <person name="Aubin K."/>
            <person name="Babbage A.K."/>
            <person name="Bagguley C.L."/>
            <person name="Bailey J."/>
            <person name="Beasley H."/>
            <person name="Bethel G."/>
            <person name="Bird C.P."/>
            <person name="Bray-Allen S."/>
            <person name="Brown J.Y."/>
            <person name="Brown A.J."/>
            <person name="Buckley D."/>
            <person name="Burton J."/>
            <person name="Bye J."/>
            <person name="Carder C."/>
            <person name="Chapman J.C."/>
            <person name="Clark S.Y."/>
            <person name="Clarke G."/>
            <person name="Clee C."/>
            <person name="Cobley V."/>
            <person name="Collier R.E."/>
            <person name="Corby N."/>
            <person name="Coville G.J."/>
            <person name="Davies J."/>
            <person name="Deadman R."/>
            <person name="Dunn M."/>
            <person name="Earthrowl M."/>
            <person name="Ellington A.G."/>
            <person name="Errington H."/>
            <person name="Frankish A."/>
            <person name="Frankland J."/>
            <person name="French L."/>
            <person name="Garner P."/>
            <person name="Garnett J."/>
            <person name="Gay L."/>
            <person name="Ghori M.R.J."/>
            <person name="Gibson R."/>
            <person name="Gilby L.M."/>
            <person name="Gillett W."/>
            <person name="Glithero R.J."/>
            <person name="Grafham D.V."/>
            <person name="Griffiths C."/>
            <person name="Griffiths-Jones S."/>
            <person name="Grocock R."/>
            <person name="Hammond S."/>
            <person name="Harrison E.S.I."/>
            <person name="Hart E."/>
            <person name="Haugen E."/>
            <person name="Heath P.D."/>
            <person name="Holmes S."/>
            <person name="Holt K."/>
            <person name="Howden P.J."/>
            <person name="Hunt A.R."/>
            <person name="Hunt S.E."/>
            <person name="Hunter G."/>
            <person name="Isherwood J."/>
            <person name="James R."/>
            <person name="Johnson C."/>
            <person name="Johnson D."/>
            <person name="Joy A."/>
            <person name="Kay M."/>
            <person name="Kershaw J.K."/>
            <person name="Kibukawa M."/>
            <person name="Kimberley A.M."/>
            <person name="King A."/>
            <person name="Knights A.J."/>
            <person name="Lad H."/>
            <person name="Laird G."/>
            <person name="Lawlor S."/>
            <person name="Leongamornlert D.A."/>
            <person name="Lloyd D.M."/>
            <person name="Loveland J."/>
            <person name="Lovell J."/>
            <person name="Lush M.J."/>
            <person name="Lyne R."/>
            <person name="Martin S."/>
            <person name="Mashreghi-Mohammadi M."/>
            <person name="Matthews L."/>
            <person name="Matthews N.S.W."/>
            <person name="McLaren S."/>
            <person name="Milne S."/>
            <person name="Mistry S."/>
            <person name="Moore M.J.F."/>
            <person name="Nickerson T."/>
            <person name="O'Dell C.N."/>
            <person name="Oliver K."/>
            <person name="Palmeiri A."/>
            <person name="Palmer S.A."/>
            <person name="Parker A."/>
            <person name="Patel D."/>
            <person name="Pearce A.V."/>
            <person name="Peck A.I."/>
            <person name="Pelan S."/>
            <person name="Phelps K."/>
            <person name="Phillimore B.J."/>
            <person name="Plumb R."/>
            <person name="Rajan J."/>
            <person name="Raymond C."/>
            <person name="Rouse G."/>
            <person name="Saenphimmachak C."/>
            <person name="Sehra H.K."/>
            <person name="Sheridan E."/>
            <person name="Shownkeen R."/>
            <person name="Sims S."/>
            <person name="Skuce C.D."/>
            <person name="Smith M."/>
            <person name="Steward C."/>
            <person name="Subramanian S."/>
            <person name="Sycamore N."/>
            <person name="Tracey A."/>
            <person name="Tromans A."/>
            <person name="Van Helmond Z."/>
            <person name="Wall M."/>
            <person name="Wallis J.M."/>
            <person name="White S."/>
            <person name="Whitehead S.L."/>
            <person name="Wilkinson J.E."/>
            <person name="Willey D.L."/>
            <person name="Williams H."/>
            <person name="Wilming L."/>
            <person name="Wray P.W."/>
            <person name="Wu Z."/>
            <person name="Coulson A."/>
            <person name="Vaudin M."/>
            <person name="Sulston J.E."/>
            <person name="Durbin R.M."/>
            <person name="Hubbard T."/>
            <person name="Wooster R."/>
            <person name="Dunham I."/>
            <person name="Carter N.P."/>
            <person name="McVean G."/>
            <person name="Ross M.T."/>
            <person name="Harrow J."/>
            <person name="Olson M.V."/>
            <person name="Beck S."/>
            <person name="Rogers J."/>
            <person name="Bentley D.R."/>
        </authorList>
    </citation>
    <scope>NUCLEOTIDE SEQUENCE [LARGE SCALE GENOMIC DNA]</scope>
</reference>
<reference key="3">
    <citation type="journal article" date="2004" name="Genome Res.">
        <title>The status, quality, and expansion of the NIH full-length cDNA project: the Mammalian Gene Collection (MGC).</title>
        <authorList>
            <consortium name="The MGC Project Team"/>
        </authorList>
    </citation>
    <scope>NUCLEOTIDE SEQUENCE [LARGE SCALE MRNA]</scope>
    <source>
        <tissue>Placenta</tissue>
    </source>
</reference>
<reference key="4">
    <citation type="journal article" date="2004" name="Mol. Cell">
        <title>Human Argonaute2 mediates RNA cleavage targeted by miRNAs and siRNAs.</title>
        <authorList>
            <person name="Meister G."/>
            <person name="Landthaler M."/>
            <person name="Patkaniowska A."/>
            <person name="Dorsett Y."/>
            <person name="Teng G."/>
            <person name="Tuschl T."/>
        </authorList>
    </citation>
    <scope>ASSOCIATION WITH MIRNA</scope>
</reference>
<reference key="5">
    <citation type="journal article" date="2005" name="Curr. Biol.">
        <title>Identification of novel argonaute-associated proteins.</title>
        <authorList>
            <person name="Meister G."/>
            <person name="Landthaler M."/>
            <person name="Peters L."/>
            <person name="Chen P.Y."/>
            <person name="Urlaub H."/>
            <person name="Luehrmann R."/>
            <person name="Tuschl T."/>
        </authorList>
    </citation>
    <scope>FUNCTION</scope>
    <scope>INTERACTION WITH DICER1; MOV10; PRMT5 AND TNRC6B</scope>
    <scope>SUBCELLULAR LOCATION</scope>
</reference>
<reference key="6">
    <citation type="journal article" date="2006" name="Nat. Struct. Mol. Biol.">
        <title>Involvement of AGO1 and AGO2 in mammalian transcriptional silencing.</title>
        <authorList>
            <person name="Janowski B.A."/>
            <person name="Huffman K.E."/>
            <person name="Schwartz J.C."/>
            <person name="Ram R."/>
            <person name="Nordsell R."/>
            <person name="Shames D.S."/>
            <person name="Minna J.D."/>
            <person name="Corey D.R."/>
        </authorList>
    </citation>
    <scope>FUNCTION</scope>
</reference>
<reference key="7">
    <citation type="journal article" date="2006" name="PLoS Biol.">
        <title>Translation repression in human cells by microRNA-induced gene silencing requires RCK/p54.</title>
        <authorList>
            <person name="Chu C.-Y."/>
            <person name="Rana T.M."/>
        </authorList>
    </citation>
    <scope>INTERACTION WITH DDX6 AND AGO2</scope>
</reference>
<reference key="8">
    <citation type="journal article" date="2007" name="EMBO Rep.">
        <title>Proteomic and functional analysis of Argonaute-containing mRNA-protein complexes in human cells.</title>
        <authorList>
            <person name="Hoeck J."/>
            <person name="Weinmann L."/>
            <person name="Ender C."/>
            <person name="Ruedel S."/>
            <person name="Kremmer E."/>
            <person name="Raabe M."/>
            <person name="Urlaub H."/>
            <person name="Meister G."/>
        </authorList>
    </citation>
    <scope>ASSOCIATION WITH POLYSOMES AND MNRP</scope>
    <scope>INTERACTION WITH DDB1; DDX5; DHX30; DHX36; DDX47; ELAVL1; HNRNPF; IGF2BP1; ILF3; MATR3; PABPC1; RBM4; SART3; UPF1 AND YBX1</scope>
</reference>
<reference key="9">
    <citation type="journal article" date="2008" name="Curr. Biol.">
        <title>Importance of translation and nonnucleolytic ago proteins for on-target RNA interference.</title>
        <authorList>
            <person name="Wu L."/>
            <person name="Fan J."/>
            <person name="Belasco J.G."/>
        </authorList>
    </citation>
    <scope>FUNCTION</scope>
</reference>
<reference key="10">
    <citation type="journal article" date="2009" name="Cell">
        <title>Importin 8 is a gene silencing factor that targets argonaute proteins to distinct mRNAs.</title>
        <authorList>
            <person name="Weinmann L."/>
            <person name="Hoeck J."/>
            <person name="Ivacevic T."/>
            <person name="Ohrt T."/>
            <person name="Muetze J."/>
            <person name="Schwille P."/>
            <person name="Kremmer E."/>
            <person name="Benes V."/>
            <person name="Urlaub H."/>
            <person name="Meister G."/>
        </authorList>
    </citation>
    <scope>INTERACTION WITH IMP8</scope>
</reference>
<reference key="11">
    <citation type="journal article" date="2010" name="Proc. Natl. Acad. Sci. U.S.A.">
        <title>LIM-domain proteins, LIMD1, Ajuba, and WTIP are required for microRNA-mediated gene silencing.</title>
        <authorList>
            <person name="James V."/>
            <person name="Zhang Y."/>
            <person name="Foxler D.E."/>
            <person name="de Moor C.H."/>
            <person name="Kong Y.W."/>
            <person name="Webb T.M."/>
            <person name="Self T.J."/>
            <person name="Feng Y."/>
            <person name="Lagos D."/>
            <person name="Chu C.Y."/>
            <person name="Rana T.M."/>
            <person name="Morley S.J."/>
            <person name="Longmore G.D."/>
            <person name="Bushell M."/>
            <person name="Sharp T.V."/>
        </authorList>
    </citation>
    <scope>SUBCELLULAR LOCATION</scope>
    <scope>INTERACTION WITH LIMD1; WTIP AND AJUBA</scope>
</reference>
<reference key="12">
    <citation type="journal article" date="2011" name="BMC Syst. Biol.">
        <title>Initial characterization of the human central proteome.</title>
        <authorList>
            <person name="Burkard T.R."/>
            <person name="Planyavsky M."/>
            <person name="Kaupe I."/>
            <person name="Breitwieser F.P."/>
            <person name="Buerckstuemmer T."/>
            <person name="Bennett K.L."/>
            <person name="Superti-Furga G."/>
            <person name="Colinge J."/>
        </authorList>
    </citation>
    <scope>IDENTIFICATION BY MASS SPECTROMETRY [LARGE SCALE ANALYSIS]</scope>
</reference>
<reference key="13">
    <citation type="journal article" date="2012" name="J. Virol.">
        <title>HIV-1 replication and APOBEC3 antiviral activity are not regulated by P bodies.</title>
        <authorList>
            <person name="Phalora P.K."/>
            <person name="Sherer N.M."/>
            <person name="Wolinsky S.M."/>
            <person name="Swanson C.M."/>
            <person name="Malim M.H."/>
        </authorList>
    </citation>
    <scope>INTERACTION WITH APOBEC3F; APOBEC3G AND APOBEC3H</scope>
</reference>
<reference key="14">
    <citation type="journal article" date="2004" name="Nature">
        <title>Structural basis for overhang-specific small interfering RNA recognition by the PAZ domain.</title>
        <authorList>
            <person name="Ma J.-B."/>
            <person name="Ye K."/>
            <person name="Patel D.J."/>
        </authorList>
    </citation>
    <scope>X-RAY CRYSTALLOGRAPHY (2.6 ANGSTROMS) OF 225-369</scope>
    <scope>RNA-BINDING</scope>
</reference>
<reference key="15">
    <citation type="journal article" date="2013" name="Cell Rep.">
        <title>Eukaryote-specific insertion elements control human ARGONAUTE slicer activity.</title>
        <authorList>
            <person name="Nakanishi K."/>
            <person name="Ascano M."/>
            <person name="Gogakos T."/>
            <person name="Ishibe-Murakami S."/>
            <person name="Serganov A.A."/>
            <person name="Briskin D."/>
            <person name="Morozov P."/>
            <person name="Tuschl T."/>
            <person name="Patel D.J."/>
        </authorList>
    </citation>
    <scope>X-RAY CRYSTALLOGRAPHY (2.29 ANGSTROMS) IN COMPLEX WITH RNA</scope>
    <scope>RNA-BINDING</scope>
    <scope>MUTAGENESIS OF PRO-670; PRO-675 AND ARG-805</scope>
    <scope>LACK OF CATALYTIC ACTIVITY</scope>
</reference>
<reference key="16">
    <citation type="journal article" date="2013" name="Cell Rep.">
        <title>The making of a slicer: activation of human Argonaute-1.</title>
        <authorList>
            <person name="Faehnle C.R."/>
            <person name="Elkayam E."/>
            <person name="Haase A.D."/>
            <person name="Hannon G.J."/>
            <person name="Joshua-Tor L."/>
        </authorList>
    </citation>
    <scope>X-RAY CRYSTALLOGRAPHY (1.75 ANGSTROMS) IN COMPLEX WITH RNA</scope>
    <scope>LACK OF CATALYTIC ACTIVITY</scope>
    <scope>MUTAGENESIS OF LEU-674 AND ARG-805</scope>
</reference>
<reference key="17">
    <citation type="journal article" date="2012" name="Lancet">
        <title>Range of genetic mutations associated with severe non-syndromic sporadic intellectual disability: an exome sequencing study.</title>
        <authorList>
            <person name="Rauch A."/>
            <person name="Wieczorek D."/>
            <person name="Graf E."/>
            <person name="Wieland T."/>
            <person name="Endele S."/>
            <person name="Schwarzmayr T."/>
            <person name="Albrecht B."/>
            <person name="Bartholdi D."/>
            <person name="Beygo J."/>
            <person name="Di Donato N."/>
            <person name="Dufke A."/>
            <person name="Cremer K."/>
            <person name="Hempel M."/>
            <person name="Horn D."/>
            <person name="Hoyer J."/>
            <person name="Joset P."/>
            <person name="Roepke A."/>
            <person name="Moog U."/>
            <person name="Riess A."/>
            <person name="Thiel C.T."/>
            <person name="Tzschach A."/>
            <person name="Wiesener A."/>
            <person name="Wohlleber E."/>
            <person name="Zweier C."/>
            <person name="Ekici A.B."/>
            <person name="Zink A.M."/>
            <person name="Rump A."/>
            <person name="Meisinger C."/>
            <person name="Grallert H."/>
            <person name="Sticht H."/>
            <person name="Schenck A."/>
            <person name="Engels H."/>
            <person name="Rappold G."/>
            <person name="Schroeck E."/>
            <person name="Wieacker P."/>
            <person name="Riess O."/>
            <person name="Meitinger T."/>
            <person name="Reis A."/>
            <person name="Strom T.M."/>
        </authorList>
    </citation>
    <scope>VARIANT NEDLBAS PRO-190</scope>
    <scope>INVOLVEMENT IN NEDLBAS</scope>
</reference>
<reference key="18">
    <citation type="journal article" date="2014" name="PLoS Genet.">
        <title>De novo mutations in moderate or severe intellectual disability.</title>
        <authorList>
            <person name="Hamdan F.F."/>
            <person name="Srour M."/>
            <person name="Capo-Chichi J.M."/>
            <person name="Daoud H."/>
            <person name="Nassif C."/>
            <person name="Patry L."/>
            <person name="Massicotte C."/>
            <person name="Ambalavanan A."/>
            <person name="Spiegelman D."/>
            <person name="Diallo O."/>
            <person name="Henrion E."/>
            <person name="Dionne-Laporte A."/>
            <person name="Fougerat A."/>
            <person name="Pshezhetsky A.V."/>
            <person name="Venkateswaran S."/>
            <person name="Rouleau G.A."/>
            <person name="Michaud J.L."/>
        </authorList>
    </citation>
    <scope>VARIANT NEDLBAS SER-199</scope>
    <scope>INVOLVEMENT IN NEDLBAS</scope>
</reference>
<reference key="19">
    <citation type="journal article" date="2017" name="J. Med. Genet.">
        <title>High diagnostic yield of syndromic intellectual disability by targeted next-generation sequencing.</title>
        <authorList>
            <person name="Martinez F."/>
            <person name="Caro-Llopis A."/>
            <person name="Rosello M."/>
            <person name="Oltra S."/>
            <person name="Mayo S."/>
            <person name="Monfort S."/>
            <person name="Orellana C."/>
        </authorList>
    </citation>
    <scope>VARIANT NEDLBAS LYS-195</scope>
</reference>
<reference key="20">
    <citation type="journal article" date="2019" name="Eur. J. Med. Genet.">
        <title>Further evidence of a causal association between AGO1, a critical regulator of microRNA formation, and intellectual disability/autism spectrum disorder.</title>
        <authorList>
            <person name="Sakaguchi A."/>
            <person name="Yamashita Y."/>
            <person name="Ishii T."/>
            <person name="Uehara T."/>
            <person name="Kosaki K."/>
            <person name="Takahashi T."/>
            <person name="Takenouchi T."/>
        </authorList>
    </citation>
    <scope>VARIANT NEDLBAS SER-199</scope>
</reference>
<reference key="21">
    <citation type="journal article" date="2022" name="J. Med. Genet.">
        <title>De novo coding variants in the AGO1 gene cause a neurodevelopmental disorder with intellectual disability.</title>
        <authorList>
            <person name="Schalk A."/>
            <person name="Cousin M.A."/>
            <person name="Dsouza N.R."/>
            <person name="Challman T.D."/>
            <person name="Wain K.E."/>
            <person name="Powis Z."/>
            <person name="Minks K."/>
            <person name="Trimouille A."/>
            <person name="Lasseaux E."/>
            <person name="Lacombe D."/>
            <person name="Angelini C."/>
            <person name="Michaud V."/>
            <person name="Van-Gils J."/>
            <person name="Spataro N."/>
            <person name="Ruiz A."/>
            <person name="Gabau E."/>
            <person name="Stolerman E."/>
            <person name="Washington C."/>
            <person name="Louie R."/>
            <person name="Lanpher B.C."/>
            <person name="Kemppainen J.L."/>
            <person name="Innes M."/>
            <person name="Kooy F."/>
            <person name="Meuwissen M."/>
            <person name="Goldenberg A."/>
            <person name="Lecoquierre F."/>
            <person name="Vera G."/>
            <person name="Diderich K.E.M."/>
            <person name="Sheidley B."/>
            <person name="El Achkar C.M."/>
            <person name="Park M."/>
            <person name="Hamdan F.F."/>
            <person name="Michaud J.L."/>
            <person name="Lewis A.J."/>
            <person name="Zweier C."/>
            <person name="Reis A."/>
            <person name="Wagner M."/>
            <person name="Weigand H."/>
            <person name="Journel H."/>
            <person name="Keren B."/>
            <person name="Passemard S."/>
            <person name="Mignot C."/>
            <person name="van Gassen K."/>
            <person name="Brilstra E.H."/>
            <person name="Itzikowitz G."/>
            <person name="O'Heir E."/>
            <person name="Allen J."/>
            <person name="Donald K.A."/>
            <person name="Korf B.R."/>
            <person name="Skelton T."/>
            <person name="Thompson M."/>
            <person name="Robin N.H."/>
            <person name="Rudy N.L."/>
            <person name="Dobyns W.B."/>
            <person name="Foss K."/>
            <person name="Zarate Y.A."/>
            <person name="Bosanko K.A."/>
            <person name="Alembik Y."/>
            <person name="Durand B."/>
            <person name="Tran Mau-Them F."/>
            <person name="Ranza E."/>
            <person name="Blanc X."/>
            <person name="Antonarakis S.E."/>
            <person name="McWalter K."/>
            <person name="Torti E."/>
            <person name="Millan F."/>
            <person name="Dameron A."/>
            <person name="Tokita M."/>
            <person name="Zimmermann M.T."/>
            <person name="Klee E.W."/>
            <person name="Piton A."/>
            <person name="Gerard B."/>
        </authorList>
    </citation>
    <scope>VARIANTS NEDLBAS PHE-180 DEL; LEU-189; ARG-190; PRO-190; SER-199; VAL-216; HIS-253; ILE-254; LEU-324; ILE-355; ARG-358; GLU-376 DEL; PHE-418; LEU-751; MET-781 AND PHE-797</scope>
</reference>
<sequence>MEAGPSGAAAGAYLPPLQQVFQAPRRPGIGTVGKPIKLLANYFEVDIPKIDVYHYEVDIKPDKCPRRVNREVVEYMVQHFKPQIFGDRKPVYDGKKNIYTVTALPIGNERVDFEVTIPGEGKDRIFKVSIKWLAIVSWRMLHEALVSGQIPVPLESVQALDVAMRHLASMRYTPVGRSFFSPPEGYYHPLGGGREVWFGFHQSVRPAMWKMMLNIDVSATAFYKAQPVIEFMCEVLDIRNIDEQPKPLTDSQRVRFTKEIKGLKVEVTHCGQMKRKYRVCNVTRRPASHQTFPLQLESGQTVECTVAQYFKQKYNLQLKYPHLPCLQVGQEQKHTYLPLEVCNIVAGQRCIKKLTDNQTSTMIKATARSAPDRQEEISRLMKNASYNLDPYIQEFGIKVKDDMTEVTGRVLPAPILQYGGRNRAIATPNQGVWDMRGKQFYNGIEIKVWAIACFAPQKQCREEVLKNFTDQLRKISKDAGMPIQGQPCFCKYAQGADSVEPMFRHLKNTYSGLQLIIVILPGKTPVYAEVKRVGDTLLGMATQCVQVKNVVKTSPQTLSNLCLKINVKLGGINNILVPHQRSAVFQQPVIFLGADVTHPPAGDGKKPSITAVVGSMDAHPSRYCATVRVQRPRQEIIEDLSYMVRELLIQFYKSTRFKPTRIIFYRDGVPEGQLPQILHYELLAIRDACIKLEKDYQPGITYIVVQKRHHTRLFCADKNERIGKSGNIPAGTTVDTNITHPFEFDFYLCSHAGIQGTSRPSHYYVLWDDNRFTADELQILTYQLCHTYVRCTRSVSIPAPAYYARLVAFRARYHLVDKEHDSGEGSHISGQSNGRDPQALAKAVQVHQDTLRTMYFA</sequence>